<keyword id="KW-0460">Magnesium</keyword>
<keyword id="KW-0464">Manganese</keyword>
<keyword id="KW-0474">Menaquinone biosynthesis</keyword>
<keyword id="KW-0479">Metal-binding</keyword>
<keyword id="KW-0786">Thiamine pyrophosphate</keyword>
<keyword id="KW-0808">Transferase</keyword>
<reference key="1">
    <citation type="journal article" date="2001" name="Lancet">
        <title>Whole genome sequencing of meticillin-resistant Staphylococcus aureus.</title>
        <authorList>
            <person name="Kuroda M."/>
            <person name="Ohta T."/>
            <person name="Uchiyama I."/>
            <person name="Baba T."/>
            <person name="Yuzawa H."/>
            <person name="Kobayashi I."/>
            <person name="Cui L."/>
            <person name="Oguchi A."/>
            <person name="Aoki K."/>
            <person name="Nagai Y."/>
            <person name="Lian J.-Q."/>
            <person name="Ito T."/>
            <person name="Kanamori M."/>
            <person name="Matsumaru H."/>
            <person name="Maruyama A."/>
            <person name="Murakami H."/>
            <person name="Hosoyama A."/>
            <person name="Mizutani-Ui Y."/>
            <person name="Takahashi N.K."/>
            <person name="Sawano T."/>
            <person name="Inoue R."/>
            <person name="Kaito C."/>
            <person name="Sekimizu K."/>
            <person name="Hirakawa H."/>
            <person name="Kuhara S."/>
            <person name="Goto S."/>
            <person name="Yabuzaki J."/>
            <person name="Kanehisa M."/>
            <person name="Yamashita A."/>
            <person name="Oshima K."/>
            <person name="Furuya K."/>
            <person name="Yoshino C."/>
            <person name="Shiba T."/>
            <person name="Hattori M."/>
            <person name="Ogasawara N."/>
            <person name="Hayashi H."/>
            <person name="Hiramatsu K."/>
        </authorList>
    </citation>
    <scope>NUCLEOTIDE SEQUENCE [LARGE SCALE GENOMIC DNA]</scope>
    <source>
        <strain>N315</strain>
    </source>
</reference>
<dbReference type="EC" id="2.2.1.9" evidence="1"/>
<dbReference type="EMBL" id="BA000018">
    <property type="protein sequence ID" value="BAB42141.1"/>
    <property type="molecule type" value="Genomic_DNA"/>
</dbReference>
<dbReference type="PIR" id="B89873">
    <property type="entry name" value="B89873"/>
</dbReference>
<dbReference type="RefSeq" id="WP_000526694.1">
    <property type="nucleotide sequence ID" value="NC_002745.2"/>
</dbReference>
<dbReference type="SMR" id="Q7A6B1"/>
<dbReference type="EnsemblBacteria" id="BAB42141">
    <property type="protein sequence ID" value="BAB42141"/>
    <property type="gene ID" value="BAB42141"/>
</dbReference>
<dbReference type="KEGG" id="sau:SA0896"/>
<dbReference type="HOGENOM" id="CLU_006051_3_0_9"/>
<dbReference type="UniPathway" id="UPA00079"/>
<dbReference type="UniPathway" id="UPA01057">
    <property type="reaction ID" value="UER00164"/>
</dbReference>
<dbReference type="GO" id="GO:0070204">
    <property type="term" value="F:2-succinyl-5-enolpyruvyl-6-hydroxy-3-cyclohexene-1-carboxylic-acid synthase activity"/>
    <property type="evidence" value="ECO:0007669"/>
    <property type="project" value="UniProtKB-UniRule"/>
</dbReference>
<dbReference type="GO" id="GO:0000287">
    <property type="term" value="F:magnesium ion binding"/>
    <property type="evidence" value="ECO:0007669"/>
    <property type="project" value="UniProtKB-UniRule"/>
</dbReference>
<dbReference type="GO" id="GO:0030145">
    <property type="term" value="F:manganese ion binding"/>
    <property type="evidence" value="ECO:0007669"/>
    <property type="project" value="UniProtKB-UniRule"/>
</dbReference>
<dbReference type="GO" id="GO:0030976">
    <property type="term" value="F:thiamine pyrophosphate binding"/>
    <property type="evidence" value="ECO:0007669"/>
    <property type="project" value="UniProtKB-UniRule"/>
</dbReference>
<dbReference type="GO" id="GO:0009234">
    <property type="term" value="P:menaquinone biosynthetic process"/>
    <property type="evidence" value="ECO:0007669"/>
    <property type="project" value="UniProtKB-UniRule"/>
</dbReference>
<dbReference type="CDD" id="cd07037">
    <property type="entry name" value="TPP_PYR_MenD"/>
    <property type="match status" value="1"/>
</dbReference>
<dbReference type="CDD" id="cd02009">
    <property type="entry name" value="TPP_SHCHC_synthase"/>
    <property type="match status" value="1"/>
</dbReference>
<dbReference type="Gene3D" id="3.40.50.970">
    <property type="match status" value="2"/>
</dbReference>
<dbReference type="Gene3D" id="3.40.50.1220">
    <property type="entry name" value="TPP-binding domain"/>
    <property type="match status" value="1"/>
</dbReference>
<dbReference type="HAMAP" id="MF_01659">
    <property type="entry name" value="MenD"/>
    <property type="match status" value="1"/>
</dbReference>
<dbReference type="InterPro" id="IPR004433">
    <property type="entry name" value="MenaQ_synth_MenD"/>
</dbReference>
<dbReference type="InterPro" id="IPR032264">
    <property type="entry name" value="MenD_middle"/>
</dbReference>
<dbReference type="InterPro" id="IPR029061">
    <property type="entry name" value="THDP-binding"/>
</dbReference>
<dbReference type="InterPro" id="IPR012001">
    <property type="entry name" value="Thiamin_PyroP_enz_TPP-bd_dom"/>
</dbReference>
<dbReference type="InterPro" id="IPR011766">
    <property type="entry name" value="TPP_enzyme_TPP-bd"/>
</dbReference>
<dbReference type="NCBIfam" id="TIGR00173">
    <property type="entry name" value="menD"/>
    <property type="match status" value="1"/>
</dbReference>
<dbReference type="PANTHER" id="PTHR42916">
    <property type="entry name" value="2-SUCCINYL-5-ENOLPYRUVYL-6-HYDROXY-3-CYCLOHEXENE-1-CARBOXYLATE SYNTHASE"/>
    <property type="match status" value="1"/>
</dbReference>
<dbReference type="PANTHER" id="PTHR42916:SF1">
    <property type="entry name" value="PROTEIN PHYLLO, CHLOROPLASTIC"/>
    <property type="match status" value="1"/>
</dbReference>
<dbReference type="Pfam" id="PF02775">
    <property type="entry name" value="TPP_enzyme_C"/>
    <property type="match status" value="1"/>
</dbReference>
<dbReference type="Pfam" id="PF16582">
    <property type="entry name" value="TPP_enzyme_M_2"/>
    <property type="match status" value="1"/>
</dbReference>
<dbReference type="Pfam" id="PF02776">
    <property type="entry name" value="TPP_enzyme_N"/>
    <property type="match status" value="1"/>
</dbReference>
<dbReference type="PIRSF" id="PIRSF004983">
    <property type="entry name" value="MenD"/>
    <property type="match status" value="1"/>
</dbReference>
<dbReference type="SUPFAM" id="SSF52518">
    <property type="entry name" value="Thiamin diphosphate-binding fold (THDP-binding)"/>
    <property type="match status" value="2"/>
</dbReference>
<evidence type="ECO:0000255" key="1">
    <source>
        <dbReference type="HAMAP-Rule" id="MF_01659"/>
    </source>
</evidence>
<name>MEND_STAAN</name>
<accession>Q7A6B1</accession>
<proteinExistence type="inferred from homology"/>
<organism>
    <name type="scientific">Staphylococcus aureus (strain N315)</name>
    <dbReference type="NCBI Taxonomy" id="158879"/>
    <lineage>
        <taxon>Bacteria</taxon>
        <taxon>Bacillati</taxon>
        <taxon>Bacillota</taxon>
        <taxon>Bacilli</taxon>
        <taxon>Bacillales</taxon>
        <taxon>Staphylococcaceae</taxon>
        <taxon>Staphylococcus</taxon>
    </lineage>
</organism>
<gene>
    <name evidence="1" type="primary">menD</name>
    <name type="ordered locus">SA0896</name>
</gene>
<feature type="chain" id="PRO_0000341858" description="2-succinyl-5-enolpyruvyl-6-hydroxy-3-cyclohexene-1-carboxylate synthase">
    <location>
        <begin position="1"/>
        <end position="557"/>
    </location>
</feature>
<sequence>MGNHKAALTKQVFTFASELYAYGVREVVISPGSRSTPLALAFEAHPNIKTWIHPDERSAAFFAVGLIKGSERPVAILCTSGTAAANYTPAIAESQISRIPLIVLTSDRPHELRSVGAPQAINQVNMFNNYVSYEFDMPIADDSKETINAIYYQMQIASQYLYGPHKGPIHFNLPFRDPLTPDLNATELLTSEMKILPHYQKSIDASALRHILNKKKGLIIVGDMQHQEVDQILTYSTIYDLPILADPLSHLRKFDHPNVICTYDLLFRSGLDLNVDFVIRVGKPVISKKLNQWLKKTDAFQILVQNNDKIDVFPIAPDISYEISANDFFRSLMEDTTINRVSWLEKWQCLEKKGRKEIKCYLEQATDESAFVGELIKKTSEKDALFISNSMPIRDVDNLLLNKNIDVYANRGANGIDGIVSTALGMAVHKRITLLIGDLSFYHDMNGLLMSKLNNIQMNIVLLNNDGGGIFSYLPQKESATDYFERLFGTPTGLDFEYTAKLYQFDFKRFNSVSEFKNATLLSETSTIYELITNREDNFKQHQILYQKLSEMIHDTL</sequence>
<protein>
    <recommendedName>
        <fullName evidence="1">2-succinyl-5-enolpyruvyl-6-hydroxy-3-cyclohexene-1-carboxylate synthase</fullName>
        <shortName evidence="1">SEPHCHC synthase</shortName>
        <ecNumber evidence="1">2.2.1.9</ecNumber>
    </recommendedName>
    <alternativeName>
        <fullName evidence="1">Menaquinone biosynthesis protein MenD</fullName>
    </alternativeName>
</protein>
<comment type="function">
    <text evidence="1">Catalyzes the thiamine diphosphate-dependent decarboxylation of 2-oxoglutarate and the subsequent addition of the resulting succinic semialdehyde-thiamine pyrophosphate anion to isochorismate to yield 2-succinyl-5-enolpyruvyl-6-hydroxy-3-cyclohexene-1-carboxylate (SEPHCHC).</text>
</comment>
<comment type="catalytic activity">
    <reaction evidence="1">
        <text>isochorismate + 2-oxoglutarate + H(+) = 5-enolpyruvoyl-6-hydroxy-2-succinyl-cyclohex-3-ene-1-carboxylate + CO2</text>
        <dbReference type="Rhea" id="RHEA:25593"/>
        <dbReference type="ChEBI" id="CHEBI:15378"/>
        <dbReference type="ChEBI" id="CHEBI:16526"/>
        <dbReference type="ChEBI" id="CHEBI:16810"/>
        <dbReference type="ChEBI" id="CHEBI:29780"/>
        <dbReference type="ChEBI" id="CHEBI:58818"/>
        <dbReference type="EC" id="2.2.1.9"/>
    </reaction>
</comment>
<comment type="cofactor">
    <cofactor evidence="1">
        <name>Mg(2+)</name>
        <dbReference type="ChEBI" id="CHEBI:18420"/>
    </cofactor>
    <cofactor evidence="1">
        <name>Mn(2+)</name>
        <dbReference type="ChEBI" id="CHEBI:29035"/>
    </cofactor>
</comment>
<comment type="cofactor">
    <cofactor evidence="1">
        <name>thiamine diphosphate</name>
        <dbReference type="ChEBI" id="CHEBI:58937"/>
    </cofactor>
    <text evidence="1">Binds 1 thiamine pyrophosphate per subunit.</text>
</comment>
<comment type="pathway">
    <text evidence="1">Quinol/quinone metabolism; 1,4-dihydroxy-2-naphthoate biosynthesis; 1,4-dihydroxy-2-naphthoate from chorismate: step 2/7.</text>
</comment>
<comment type="pathway">
    <text evidence="1">Quinol/quinone metabolism; menaquinone biosynthesis.</text>
</comment>
<comment type="subunit">
    <text evidence="1">Homodimer.</text>
</comment>
<comment type="similarity">
    <text evidence="1">Belongs to the TPP enzyme family. MenD subfamily.</text>
</comment>